<dbReference type="EC" id="1.14.11.79" evidence="2"/>
<dbReference type="EMBL" id="BT020745">
    <property type="protein sequence ID" value="AAX08762.1"/>
    <property type="molecule type" value="mRNA"/>
</dbReference>
<dbReference type="EMBL" id="BC109961">
    <property type="protein sequence ID" value="AAI09962.1"/>
    <property type="molecule type" value="mRNA"/>
</dbReference>
<dbReference type="RefSeq" id="NP_001015675.1">
    <property type="nucleotide sequence ID" value="NM_001015675.1"/>
</dbReference>
<dbReference type="RefSeq" id="XP_005201241.1">
    <property type="nucleotide sequence ID" value="XM_005201184.3"/>
</dbReference>
<dbReference type="RefSeq" id="XP_005201242.1">
    <property type="nucleotide sequence ID" value="XM_005201185.2"/>
</dbReference>
<dbReference type="RefSeq" id="XP_010799281.1">
    <property type="nucleotide sequence ID" value="XM_010800979.2"/>
</dbReference>
<dbReference type="SMR" id="Q5EA24"/>
<dbReference type="FunCoup" id="Q5EA24">
    <property type="interactions" value="272"/>
</dbReference>
<dbReference type="STRING" id="9913.ENSBTAP00000070898"/>
<dbReference type="PaxDb" id="9913-ENSBTAP00000020656"/>
<dbReference type="GeneID" id="540466"/>
<dbReference type="KEGG" id="bta:540466"/>
<dbReference type="CTD" id="84864"/>
<dbReference type="eggNOG" id="KOG3706">
    <property type="taxonomic scope" value="Eukaryota"/>
</dbReference>
<dbReference type="HOGENOM" id="CLU_013645_0_1_1"/>
<dbReference type="InParanoid" id="Q5EA24"/>
<dbReference type="OrthoDB" id="425950at2759"/>
<dbReference type="TreeFam" id="TF318659"/>
<dbReference type="Proteomes" id="UP000009136">
    <property type="component" value="Unplaced"/>
</dbReference>
<dbReference type="GO" id="GO:0005730">
    <property type="term" value="C:nucleolus"/>
    <property type="evidence" value="ECO:0000318"/>
    <property type="project" value="GO_Central"/>
</dbReference>
<dbReference type="GO" id="GO:0051864">
    <property type="term" value="F:histone H3K36 demethylase activity"/>
    <property type="evidence" value="ECO:0000318"/>
    <property type="project" value="GO_Central"/>
</dbReference>
<dbReference type="GO" id="GO:0032453">
    <property type="term" value="F:histone H3K4 demethylase activity"/>
    <property type="evidence" value="ECO:0000318"/>
    <property type="project" value="GO_Central"/>
</dbReference>
<dbReference type="GO" id="GO:0046872">
    <property type="term" value="F:metal ion binding"/>
    <property type="evidence" value="ECO:0007669"/>
    <property type="project" value="UniProtKB-KW"/>
</dbReference>
<dbReference type="GO" id="GO:0036139">
    <property type="term" value="F:peptidyl-histidine dioxygenase activity"/>
    <property type="evidence" value="ECO:0007669"/>
    <property type="project" value="RHEA"/>
</dbReference>
<dbReference type="GO" id="GO:0042254">
    <property type="term" value="P:ribosome biogenesis"/>
    <property type="evidence" value="ECO:0007669"/>
    <property type="project" value="UniProtKB-KW"/>
</dbReference>
<dbReference type="FunFam" id="2.60.120.650:FF:000032">
    <property type="entry name" value="Ribosomal oxygenase 2"/>
    <property type="match status" value="1"/>
</dbReference>
<dbReference type="Gene3D" id="3.90.930.40">
    <property type="match status" value="1"/>
</dbReference>
<dbReference type="Gene3D" id="2.60.120.650">
    <property type="entry name" value="Cupin"/>
    <property type="match status" value="1"/>
</dbReference>
<dbReference type="Gene3D" id="1.10.10.1500">
    <property type="entry name" value="JmjC domain-containing ribosomal oxygenase (ROX), dimer domain"/>
    <property type="match status" value="1"/>
</dbReference>
<dbReference type="InterPro" id="IPR003347">
    <property type="entry name" value="JmjC_dom"/>
</dbReference>
<dbReference type="InterPro" id="IPR039994">
    <property type="entry name" value="NO66-like"/>
</dbReference>
<dbReference type="InterPro" id="IPR046799">
    <property type="entry name" value="ROXA-like_wH"/>
</dbReference>
<dbReference type="PANTHER" id="PTHR13096">
    <property type="entry name" value="MINA53 MYC INDUCED NUCLEAR ANTIGEN"/>
    <property type="match status" value="1"/>
</dbReference>
<dbReference type="PANTHER" id="PTHR13096:SF7">
    <property type="entry name" value="RIBOSOMAL OXYGENASE 2"/>
    <property type="match status" value="1"/>
</dbReference>
<dbReference type="Pfam" id="PF08007">
    <property type="entry name" value="JmjC_2"/>
    <property type="match status" value="1"/>
</dbReference>
<dbReference type="Pfam" id="PF20514">
    <property type="entry name" value="ROXA-like_wH"/>
    <property type="match status" value="1"/>
</dbReference>
<dbReference type="SUPFAM" id="SSF51197">
    <property type="entry name" value="Clavaminate synthase-like"/>
    <property type="match status" value="1"/>
</dbReference>
<dbReference type="PROSITE" id="PS51184">
    <property type="entry name" value="JMJC"/>
    <property type="match status" value="1"/>
</dbReference>
<feature type="chain" id="PRO_0000308376" description="Ribosomal oxygenase 2">
    <location>
        <begin position="1"/>
        <end position="462"/>
    </location>
</feature>
<feature type="domain" description="JmjC" evidence="3">
    <location>
        <begin position="139"/>
        <end position="271"/>
    </location>
</feature>
<feature type="region of interest" description="Disordered" evidence="4">
    <location>
        <begin position="1"/>
        <end position="24"/>
    </location>
</feature>
<feature type="binding site" evidence="3">
    <location>
        <position position="179"/>
    </location>
    <ligand>
        <name>Fe cation</name>
        <dbReference type="ChEBI" id="CHEBI:24875"/>
        <note>catalytic</note>
    </ligand>
</feature>
<feature type="binding site" evidence="3">
    <location>
        <position position="181"/>
    </location>
    <ligand>
        <name>Fe cation</name>
        <dbReference type="ChEBI" id="CHEBI:24875"/>
        <note>catalytic</note>
    </ligand>
</feature>
<feature type="binding site" evidence="3">
    <location>
        <position position="240"/>
    </location>
    <ligand>
        <name>Fe cation</name>
        <dbReference type="ChEBI" id="CHEBI:24875"/>
        <note>catalytic</note>
    </ligand>
</feature>
<feature type="modified residue" description="Phosphoserine" evidence="2">
    <location>
        <position position="308"/>
    </location>
</feature>
<feature type="sequence conflict" description="In Ref. 2; AAI09962." evidence="5" ref="2">
    <location>
        <position position="297"/>
    </location>
</feature>
<feature type="sequence conflict" description="In Ref. 2; AAI09962." evidence="5" ref="2">
    <original>F</original>
    <variation>I</variation>
    <location>
        <position position="367"/>
    </location>
</feature>
<evidence type="ECO:0000250" key="1"/>
<evidence type="ECO:0000250" key="2">
    <source>
        <dbReference type="UniProtKB" id="Q8IUF8"/>
    </source>
</evidence>
<evidence type="ECO:0000255" key="3">
    <source>
        <dbReference type="PROSITE-ProRule" id="PRU00538"/>
    </source>
</evidence>
<evidence type="ECO:0000256" key="4">
    <source>
        <dbReference type="SAM" id="MobiDB-lite"/>
    </source>
</evidence>
<evidence type="ECO:0000305" key="5"/>
<evidence type="ECO:0000312" key="6">
    <source>
        <dbReference type="EMBL" id="AAI09962.1"/>
    </source>
</evidence>
<evidence type="ECO:0000312" key="7">
    <source>
        <dbReference type="EMBL" id="AAX08762.1"/>
    </source>
</evidence>
<name>RIOX2_BOVIN</name>
<sequence>MPKKARPAGDGKEQGPAPKQVKVEAACGPSSPLNFDSPSGLFESFISPIKTETFFKEFWEQKPLLIQRDDPALATYYQSLFRLSDLKSLCSWGIYYGRDVNVCRCVHGKKKVLNKDGRVHFLQLRQDFDQKRATIQFHQPQRFKDELWRIQEKLECYFGSLVGSNVYITPAGAQGLPPHYDDVEVFILQLEGEKHWRLYQPTVPLAREYSVEAEDRIGRPTHEFTLKPGDLLYFPRGTIHQADTPEGLAHSTHVTISTYQSSSWGDFLLDTISGLVFDTAKADVALRAGIPRQLLLQAESIAVATRLSGFLRMLADRLEGTKELPSADMKKDFAMNRLPPYYMGDRAKLVAPGGQLPGLDSTVRLQFRDHVVLTVGPYQDPSDETRGEMVYVYHSLRNRRDTHMMGNETESYGLRFPLSYMDALKQIWNSSAISVKDLKLTTDEEKQNLVLSLWTECLIQVV</sequence>
<organism>
    <name type="scientific">Bos taurus</name>
    <name type="common">Bovine</name>
    <dbReference type="NCBI Taxonomy" id="9913"/>
    <lineage>
        <taxon>Eukaryota</taxon>
        <taxon>Metazoa</taxon>
        <taxon>Chordata</taxon>
        <taxon>Craniata</taxon>
        <taxon>Vertebrata</taxon>
        <taxon>Euteleostomi</taxon>
        <taxon>Mammalia</taxon>
        <taxon>Eutheria</taxon>
        <taxon>Laurasiatheria</taxon>
        <taxon>Artiodactyla</taxon>
        <taxon>Ruminantia</taxon>
        <taxon>Pecora</taxon>
        <taxon>Bovidae</taxon>
        <taxon>Bovinae</taxon>
        <taxon>Bos</taxon>
    </lineage>
</organism>
<accession>Q5EA24</accession>
<accession>Q32KR4</accession>
<protein>
    <recommendedName>
        <fullName>Ribosomal oxygenase 2</fullName>
    </recommendedName>
    <alternativeName>
        <fullName>Bifunctional lysine-specific demethylase and histidyl-hydroxylase MINA</fullName>
        <ecNumber evidence="2">1.14.11.79</ecNumber>
    </alternativeName>
    <alternativeName>
        <fullName>Histone lysine demethylase MINA</fullName>
    </alternativeName>
    <alternativeName>
        <fullName>MYC-induced nuclear antigen</fullName>
    </alternativeName>
</protein>
<comment type="function">
    <text evidence="2">Oxygenase that can act as both a histone lysine demethylase and a ribosomal histidine hydroxylase. Is involved in the demethylation of trimethylated 'Lys-9' on histone H3 (H3K9me3), leading to an increase in ribosomal RNA expression. Also catalyzes the hydroxylation of 60S ribosomal protein L27a on 'His-39'. May play an important role in cell growth and survival. May be involved in ribosome biogenesis, most likely during the assembly process of pre-ribosomal particles.</text>
</comment>
<comment type="catalytic activity">
    <reaction evidence="2">
        <text>L-histidyl-[ribosomal protein uL15] + 2-oxoglutarate + O2 = (3S)-3-hydroxy-L-histidyl-[ribosomal protein uL15] + succinate + CO2</text>
        <dbReference type="Rhea" id="RHEA:54024"/>
        <dbReference type="Rhea" id="RHEA-COMP:13760"/>
        <dbReference type="Rhea" id="RHEA-COMP:13761"/>
        <dbReference type="ChEBI" id="CHEBI:15379"/>
        <dbReference type="ChEBI" id="CHEBI:16526"/>
        <dbReference type="ChEBI" id="CHEBI:16810"/>
        <dbReference type="ChEBI" id="CHEBI:29979"/>
        <dbReference type="ChEBI" id="CHEBI:30031"/>
        <dbReference type="ChEBI" id="CHEBI:138021"/>
    </reaction>
</comment>
<comment type="catalytic activity">
    <reaction evidence="2">
        <text>L-histidyl-[protein] + 2-oxoglutarate + O2 = (3S)-3-hydroxy-L-histidyl-[protein] + succinate + CO2</text>
        <dbReference type="Rhea" id="RHEA:54256"/>
        <dbReference type="Rhea" id="RHEA-COMP:9745"/>
        <dbReference type="Rhea" id="RHEA-COMP:13840"/>
        <dbReference type="ChEBI" id="CHEBI:15379"/>
        <dbReference type="ChEBI" id="CHEBI:16526"/>
        <dbReference type="ChEBI" id="CHEBI:16810"/>
        <dbReference type="ChEBI" id="CHEBI:29979"/>
        <dbReference type="ChEBI" id="CHEBI:30031"/>
        <dbReference type="ChEBI" id="CHEBI:138021"/>
        <dbReference type="EC" id="1.14.11.79"/>
    </reaction>
</comment>
<comment type="cofactor">
    <cofactor evidence="1">
        <name>Fe(2+)</name>
        <dbReference type="ChEBI" id="CHEBI:29033"/>
    </cofactor>
    <text evidence="1">Binds 1 Fe(2+) ion per subunit.</text>
</comment>
<comment type="subcellular location">
    <subcellularLocation>
        <location evidence="2">Nucleus</location>
    </subcellularLocation>
    <subcellularLocation>
        <location evidence="2">Nucleus</location>
        <location evidence="2">Nucleolus</location>
    </subcellularLocation>
</comment>
<comment type="similarity">
    <text evidence="5">Belongs to the ROX family. MINA53 subfamily.</text>
</comment>
<gene>
    <name type="primary">RIOX2</name>
    <name evidence="7" type="synonym">MINA</name>
</gene>
<reference evidence="7" key="1">
    <citation type="journal article" date="2005" name="BMC Genomics">
        <title>Characterization of 954 bovine full-CDS cDNA sequences.</title>
        <authorList>
            <person name="Harhay G.P."/>
            <person name="Sonstegard T.S."/>
            <person name="Keele J.W."/>
            <person name="Heaton M.P."/>
            <person name="Clawson M.L."/>
            <person name="Snelling W.M."/>
            <person name="Wiedmann R.T."/>
            <person name="Van Tassell C.P."/>
            <person name="Smith T.P.L."/>
        </authorList>
    </citation>
    <scope>NUCLEOTIDE SEQUENCE [LARGE SCALE MRNA]</scope>
</reference>
<reference evidence="6" key="2">
    <citation type="submission" date="2005-11" db="EMBL/GenBank/DDBJ databases">
        <authorList>
            <consortium name="NIH - Mammalian Gene Collection (MGC) project"/>
        </authorList>
    </citation>
    <scope>NUCLEOTIDE SEQUENCE [LARGE SCALE MRNA]</scope>
    <source>
        <strain evidence="6">Crossbred X Angus</strain>
        <tissue evidence="6">Liver</tissue>
    </source>
</reference>
<proteinExistence type="evidence at transcript level"/>
<keyword id="KW-0223">Dioxygenase</keyword>
<keyword id="KW-0408">Iron</keyword>
<keyword id="KW-0479">Metal-binding</keyword>
<keyword id="KW-0539">Nucleus</keyword>
<keyword id="KW-0560">Oxidoreductase</keyword>
<keyword id="KW-0597">Phosphoprotein</keyword>
<keyword id="KW-1185">Reference proteome</keyword>
<keyword id="KW-0690">Ribosome biogenesis</keyword>
<keyword id="KW-0804">Transcription</keyword>
<keyword id="KW-0805">Transcription regulation</keyword>